<proteinExistence type="inferred from homology"/>
<comment type="function">
    <text evidence="1">Required for efficient N-glycosylation. Necessary for maintaining optimal levels of dolichol-linked oligosaccharides. Hydrolyzes dolichyl pyrophosphate at a very high rate and dolichyl monophosphate at a much lower rate. Does not act on phosphatidate (By similarity).</text>
</comment>
<comment type="catalytic activity">
    <reaction>
        <text>a di-trans,poly-cis-dolichyl diphosphate + H2O = a di-trans,poly-cis-dolichyl phosphate + phosphate + H(+)</text>
        <dbReference type="Rhea" id="RHEA:14385"/>
        <dbReference type="Rhea" id="RHEA-COMP:19498"/>
        <dbReference type="Rhea" id="RHEA-COMP:19506"/>
        <dbReference type="ChEBI" id="CHEBI:15377"/>
        <dbReference type="ChEBI" id="CHEBI:15378"/>
        <dbReference type="ChEBI" id="CHEBI:43474"/>
        <dbReference type="ChEBI" id="CHEBI:57497"/>
        <dbReference type="ChEBI" id="CHEBI:57683"/>
        <dbReference type="EC" id="3.6.1.43"/>
    </reaction>
</comment>
<comment type="pathway">
    <text>Protein modification; protein glycosylation.</text>
</comment>
<comment type="subcellular location">
    <subcellularLocation>
        <location evidence="1">Endoplasmic reticulum membrane</location>
        <topology evidence="1">Multi-pass membrane protein</topology>
    </subcellularLocation>
</comment>
<comment type="similarity">
    <text evidence="3">Belongs to the dolichyldiphosphatase family.</text>
</comment>
<sequence length="238" mass="27003">MAADGQCSLPASWRPVTLTHVEYPAGDLSGHLLAYLSLSPVFVIVGFVTLIIFKRELHTISFLGGLALNEGVNWLIKNVIQEPRPCGGPHTAVGTKYGMPSSHSQFMWFFSVYSFLFLYLRMHQTNNARFLDLLWRHVLSLGLLAAAFLVSYSRVYLLYHTWSQVLYGGIAGGLMAVAWFIFTQEVLTPLFPRIAAWPISEFFLIRDTSLIPNVLWFEYTVTRAEARNRQRKLGTKLQ</sequence>
<reference key="1">
    <citation type="submission" date="2008-01" db="EMBL/GenBank/DDBJ databases">
        <title>NISC comparative sequencing initiative.</title>
        <authorList>
            <person name="Antonellis A."/>
            <person name="Benjamin B."/>
            <person name="Blakesley R.W."/>
            <person name="Bouffard G.G."/>
            <person name="Brinkley C."/>
            <person name="Brooks S."/>
            <person name="Chu G."/>
            <person name="Chub I."/>
            <person name="Coleman H."/>
            <person name="Fuksenko T."/>
            <person name="Gestole M."/>
            <person name="Gregory M."/>
            <person name="Guan X."/>
            <person name="Gupta J."/>
            <person name="Gurson N."/>
            <person name="Han E."/>
            <person name="Han J."/>
            <person name="Hansen N."/>
            <person name="Hargrove A."/>
            <person name="Hines-Harris K."/>
            <person name="Ho S.-L."/>
            <person name="Hu P."/>
            <person name="Hunter G."/>
            <person name="Hurle B."/>
            <person name="Idol J.R."/>
            <person name="Johnson T."/>
            <person name="Knight E."/>
            <person name="Kwong P."/>
            <person name="Lee-Lin S.-Q."/>
            <person name="Legaspi R."/>
            <person name="Madden M."/>
            <person name="Maduro Q.L."/>
            <person name="Maduro V.B."/>
            <person name="Margulies E.H."/>
            <person name="Masiello C."/>
            <person name="Maskeri B."/>
            <person name="McDowell J."/>
            <person name="Merkulov G."/>
            <person name="Montemayor C."/>
            <person name="Mullikin J.C."/>
            <person name="Park M."/>
            <person name="Prasad A."/>
            <person name="Ramsahoye C."/>
            <person name="Reddix-Dugue N."/>
            <person name="Riebow N."/>
            <person name="Schandler K."/>
            <person name="Schueler M.G."/>
            <person name="Sison C."/>
            <person name="Smith L."/>
            <person name="Stantripop S."/>
            <person name="Thomas J.W."/>
            <person name="Thomas P.J."/>
            <person name="Tsipouri V."/>
            <person name="Young A."/>
            <person name="Green E.D."/>
        </authorList>
    </citation>
    <scope>NUCLEOTIDE SEQUENCE [LARGE SCALE GENOMIC DNA]</scope>
</reference>
<gene>
    <name type="primary">DOLPP1</name>
</gene>
<protein>
    <recommendedName>
        <fullName>Dolichyldiphosphatase 1</fullName>
        <ecNumber>3.6.1.43</ecNumber>
    </recommendedName>
    <alternativeName>
        <fullName>Dolichyl pyrophosphate phosphatase 1</fullName>
    </alternativeName>
</protein>
<dbReference type="EC" id="3.6.1.43"/>
<dbReference type="EMBL" id="DP000573">
    <property type="protein sequence ID" value="ABY84174.1"/>
    <property type="molecule type" value="Genomic_DNA"/>
</dbReference>
<dbReference type="RefSeq" id="XP_002743415.1">
    <property type="nucleotide sequence ID" value="XM_002743369.3"/>
</dbReference>
<dbReference type="FunCoup" id="B0KWE9">
    <property type="interactions" value="1269"/>
</dbReference>
<dbReference type="STRING" id="9483.ENSCJAP00000037716"/>
<dbReference type="eggNOG" id="KOG3146">
    <property type="taxonomic scope" value="Eukaryota"/>
</dbReference>
<dbReference type="HOGENOM" id="CLU_074922_1_2_1"/>
<dbReference type="InParanoid" id="B0KWE9"/>
<dbReference type="TreeFam" id="TF323451"/>
<dbReference type="UniPathway" id="UPA00378"/>
<dbReference type="Proteomes" id="UP000008225">
    <property type="component" value="Unplaced"/>
</dbReference>
<dbReference type="Bgee" id="ENSCJAG00000020287">
    <property type="expression patterns" value="Expressed in liver and 6 other cell types or tissues"/>
</dbReference>
<dbReference type="GO" id="GO:0005789">
    <property type="term" value="C:endoplasmic reticulum membrane"/>
    <property type="evidence" value="ECO:0007669"/>
    <property type="project" value="UniProtKB-SubCell"/>
</dbReference>
<dbReference type="GO" id="GO:0047874">
    <property type="term" value="F:dolichyldiphosphatase activity"/>
    <property type="evidence" value="ECO:0007669"/>
    <property type="project" value="UniProtKB-EC"/>
</dbReference>
<dbReference type="GO" id="GO:0008610">
    <property type="term" value="P:lipid biosynthetic process"/>
    <property type="evidence" value="ECO:0007669"/>
    <property type="project" value="TreeGrafter"/>
</dbReference>
<dbReference type="GO" id="GO:0006487">
    <property type="term" value="P:protein N-linked glycosylation"/>
    <property type="evidence" value="ECO:0007669"/>
    <property type="project" value="TreeGrafter"/>
</dbReference>
<dbReference type="CDD" id="cd03382">
    <property type="entry name" value="PAP2_dolichyldiphosphatase"/>
    <property type="match status" value="1"/>
</dbReference>
<dbReference type="FunFam" id="1.20.144.10:FF:000003">
    <property type="entry name" value="Dolichyldiphosphatase 1"/>
    <property type="match status" value="1"/>
</dbReference>
<dbReference type="Gene3D" id="1.20.144.10">
    <property type="entry name" value="Phosphatidic acid phosphatase type 2/haloperoxidase"/>
    <property type="match status" value="1"/>
</dbReference>
<dbReference type="InterPro" id="IPR039667">
    <property type="entry name" value="Dolichyldiphosphatase_PAP2"/>
</dbReference>
<dbReference type="InterPro" id="IPR036938">
    <property type="entry name" value="P_Acid_Pase_2/haloperoxi_sf"/>
</dbReference>
<dbReference type="InterPro" id="IPR000326">
    <property type="entry name" value="P_Acid_Pase_2/haloperoxidase"/>
</dbReference>
<dbReference type="PANTHER" id="PTHR11247:SF1">
    <property type="entry name" value="DOLICHYLDIPHOSPHATASE 1"/>
    <property type="match status" value="1"/>
</dbReference>
<dbReference type="PANTHER" id="PTHR11247">
    <property type="entry name" value="PALMITOYL-PROTEIN THIOESTERASE/DOLICHYLDIPHOSPHATASE 1"/>
    <property type="match status" value="1"/>
</dbReference>
<dbReference type="Pfam" id="PF01569">
    <property type="entry name" value="PAP2"/>
    <property type="match status" value="1"/>
</dbReference>
<dbReference type="SMART" id="SM00014">
    <property type="entry name" value="acidPPc"/>
    <property type="match status" value="1"/>
</dbReference>
<dbReference type="SUPFAM" id="SSF48317">
    <property type="entry name" value="Acid phosphatase/Vanadium-dependent haloperoxidase"/>
    <property type="match status" value="1"/>
</dbReference>
<organism>
    <name type="scientific">Callithrix jacchus</name>
    <name type="common">White-tufted-ear marmoset</name>
    <dbReference type="NCBI Taxonomy" id="9483"/>
    <lineage>
        <taxon>Eukaryota</taxon>
        <taxon>Metazoa</taxon>
        <taxon>Chordata</taxon>
        <taxon>Craniata</taxon>
        <taxon>Vertebrata</taxon>
        <taxon>Euteleostomi</taxon>
        <taxon>Mammalia</taxon>
        <taxon>Eutheria</taxon>
        <taxon>Euarchontoglires</taxon>
        <taxon>Primates</taxon>
        <taxon>Haplorrhini</taxon>
        <taxon>Platyrrhini</taxon>
        <taxon>Cebidae</taxon>
        <taxon>Callitrichinae</taxon>
        <taxon>Callithrix</taxon>
        <taxon>Callithrix</taxon>
    </lineage>
</organism>
<accession>B0KWE9</accession>
<feature type="chain" id="PRO_0000344994" description="Dolichyldiphosphatase 1">
    <location>
        <begin position="1"/>
        <end position="238"/>
    </location>
</feature>
<feature type="transmembrane region" description="Helical" evidence="2">
    <location>
        <begin position="33"/>
        <end position="53"/>
    </location>
</feature>
<feature type="transmembrane region" description="Helical" evidence="2">
    <location>
        <begin position="100"/>
        <end position="120"/>
    </location>
</feature>
<feature type="transmembrane region" description="Helical" evidence="2">
    <location>
        <begin position="130"/>
        <end position="150"/>
    </location>
</feature>
<feature type="transmembrane region" description="Helical" evidence="2">
    <location>
        <begin position="162"/>
        <end position="182"/>
    </location>
</feature>
<name>DOPP1_CALJA</name>
<evidence type="ECO:0000250" key="1"/>
<evidence type="ECO:0000255" key="2"/>
<evidence type="ECO:0000305" key="3"/>
<keyword id="KW-0256">Endoplasmic reticulum</keyword>
<keyword id="KW-0378">Hydrolase</keyword>
<keyword id="KW-0472">Membrane</keyword>
<keyword id="KW-1185">Reference proteome</keyword>
<keyword id="KW-0812">Transmembrane</keyword>
<keyword id="KW-1133">Transmembrane helix</keyword>